<protein>
    <recommendedName>
        <fullName evidence="1">Small ribosomal subunit protein uS10</fullName>
    </recommendedName>
    <alternativeName>
        <fullName evidence="2">30S ribosomal protein S10</fullName>
    </alternativeName>
</protein>
<proteinExistence type="inferred from homology"/>
<accession>B7J242</accession>
<reference key="1">
    <citation type="journal article" date="2011" name="J. Bacteriol.">
        <title>Whole-genome sequences of thirteen isolates of Borrelia burgdorferi.</title>
        <authorList>
            <person name="Schutzer S.E."/>
            <person name="Fraser-Liggett C.M."/>
            <person name="Casjens S.R."/>
            <person name="Qiu W.G."/>
            <person name="Dunn J.J."/>
            <person name="Mongodin E.F."/>
            <person name="Luft B.J."/>
        </authorList>
    </citation>
    <scope>NUCLEOTIDE SEQUENCE [LARGE SCALE GENOMIC DNA]</scope>
    <source>
        <strain>ZS7</strain>
    </source>
</reference>
<evidence type="ECO:0000255" key="1">
    <source>
        <dbReference type="HAMAP-Rule" id="MF_00508"/>
    </source>
</evidence>
<evidence type="ECO:0000305" key="2"/>
<organism>
    <name type="scientific">Borreliella burgdorferi (strain ZS7)</name>
    <name type="common">Borrelia burgdorferi</name>
    <dbReference type="NCBI Taxonomy" id="445985"/>
    <lineage>
        <taxon>Bacteria</taxon>
        <taxon>Pseudomonadati</taxon>
        <taxon>Spirochaetota</taxon>
        <taxon>Spirochaetia</taxon>
        <taxon>Spirochaetales</taxon>
        <taxon>Borreliaceae</taxon>
        <taxon>Borreliella</taxon>
    </lineage>
</organism>
<comment type="function">
    <text evidence="1">Involved in the binding of tRNA to the ribosomes.</text>
</comment>
<comment type="subunit">
    <text evidence="1">Part of the 30S ribosomal subunit.</text>
</comment>
<comment type="similarity">
    <text evidence="1">Belongs to the universal ribosomal protein uS10 family.</text>
</comment>
<gene>
    <name evidence="1" type="primary">rpsJ</name>
    <name type="ordered locus">BbuZS7_0488</name>
</gene>
<name>RS10_BORBZ</name>
<keyword id="KW-0687">Ribonucleoprotein</keyword>
<keyword id="KW-0689">Ribosomal protein</keyword>
<dbReference type="EMBL" id="CP001205">
    <property type="protein sequence ID" value="ACK74487.1"/>
    <property type="molecule type" value="Genomic_DNA"/>
</dbReference>
<dbReference type="RefSeq" id="WP_002557068.1">
    <property type="nucleotide sequence ID" value="NC_011728.1"/>
</dbReference>
<dbReference type="SMR" id="B7J242"/>
<dbReference type="GeneID" id="77265324"/>
<dbReference type="KEGG" id="bbz:BbuZS7_0488"/>
<dbReference type="HOGENOM" id="CLU_122625_1_3_12"/>
<dbReference type="Proteomes" id="UP000006901">
    <property type="component" value="Chromosome"/>
</dbReference>
<dbReference type="GO" id="GO:1990904">
    <property type="term" value="C:ribonucleoprotein complex"/>
    <property type="evidence" value="ECO:0007669"/>
    <property type="project" value="UniProtKB-KW"/>
</dbReference>
<dbReference type="GO" id="GO:0005840">
    <property type="term" value="C:ribosome"/>
    <property type="evidence" value="ECO:0007669"/>
    <property type="project" value="UniProtKB-KW"/>
</dbReference>
<dbReference type="GO" id="GO:0003735">
    <property type="term" value="F:structural constituent of ribosome"/>
    <property type="evidence" value="ECO:0007669"/>
    <property type="project" value="InterPro"/>
</dbReference>
<dbReference type="GO" id="GO:0000049">
    <property type="term" value="F:tRNA binding"/>
    <property type="evidence" value="ECO:0007669"/>
    <property type="project" value="UniProtKB-UniRule"/>
</dbReference>
<dbReference type="GO" id="GO:0006412">
    <property type="term" value="P:translation"/>
    <property type="evidence" value="ECO:0007669"/>
    <property type="project" value="UniProtKB-UniRule"/>
</dbReference>
<dbReference type="FunFam" id="3.30.70.600:FF:000003">
    <property type="entry name" value="30S ribosomal protein S10"/>
    <property type="match status" value="1"/>
</dbReference>
<dbReference type="Gene3D" id="3.30.70.600">
    <property type="entry name" value="Ribosomal protein S10 domain"/>
    <property type="match status" value="1"/>
</dbReference>
<dbReference type="HAMAP" id="MF_00508">
    <property type="entry name" value="Ribosomal_uS10"/>
    <property type="match status" value="1"/>
</dbReference>
<dbReference type="InterPro" id="IPR001848">
    <property type="entry name" value="Ribosomal_uS10"/>
</dbReference>
<dbReference type="InterPro" id="IPR027486">
    <property type="entry name" value="Ribosomal_uS10_dom"/>
</dbReference>
<dbReference type="InterPro" id="IPR036838">
    <property type="entry name" value="Ribosomal_uS10_dom_sf"/>
</dbReference>
<dbReference type="NCBIfam" id="NF001861">
    <property type="entry name" value="PRK00596.1"/>
    <property type="match status" value="1"/>
</dbReference>
<dbReference type="NCBIfam" id="TIGR01049">
    <property type="entry name" value="rpsJ_bact"/>
    <property type="match status" value="1"/>
</dbReference>
<dbReference type="PANTHER" id="PTHR11700">
    <property type="entry name" value="30S RIBOSOMAL PROTEIN S10 FAMILY MEMBER"/>
    <property type="match status" value="1"/>
</dbReference>
<dbReference type="Pfam" id="PF00338">
    <property type="entry name" value="Ribosomal_S10"/>
    <property type="match status" value="1"/>
</dbReference>
<dbReference type="PRINTS" id="PR00971">
    <property type="entry name" value="RIBOSOMALS10"/>
</dbReference>
<dbReference type="SMART" id="SM01403">
    <property type="entry name" value="Ribosomal_S10"/>
    <property type="match status" value="1"/>
</dbReference>
<dbReference type="SUPFAM" id="SSF54999">
    <property type="entry name" value="Ribosomal protein S10"/>
    <property type="match status" value="1"/>
</dbReference>
<sequence length="103" mass="11766">MIAKDKIRVRLFSFDVKILDQSAESIVKAVQKAKAQIKGPIPLPTKIKKYTVLRSPHVNKKSREQFEMRTHKRLIDILEPTSALMDSLMKLELPAGVEVDIKQ</sequence>
<feature type="chain" id="PRO_1000127083" description="Small ribosomal subunit protein uS10">
    <location>
        <begin position="1"/>
        <end position="103"/>
    </location>
</feature>